<name>RS15_HELPS</name>
<feature type="chain" id="PRO_1000143126" description="Small ribosomal subunit protein uS15">
    <location>
        <begin position="1"/>
        <end position="90"/>
    </location>
</feature>
<dbReference type="EMBL" id="CP001072">
    <property type="protein sequence ID" value="ACD47873.1"/>
    <property type="molecule type" value="Genomic_DNA"/>
</dbReference>
<dbReference type="RefSeq" id="WP_001207113.1">
    <property type="nucleotide sequence ID" value="NC_010698.2"/>
</dbReference>
<dbReference type="SMR" id="B2USP1"/>
<dbReference type="KEGG" id="hps:HPSH_02115"/>
<dbReference type="HOGENOM" id="CLU_148518_0_0_7"/>
<dbReference type="GO" id="GO:0022627">
    <property type="term" value="C:cytosolic small ribosomal subunit"/>
    <property type="evidence" value="ECO:0007669"/>
    <property type="project" value="TreeGrafter"/>
</dbReference>
<dbReference type="GO" id="GO:0019843">
    <property type="term" value="F:rRNA binding"/>
    <property type="evidence" value="ECO:0007669"/>
    <property type="project" value="UniProtKB-UniRule"/>
</dbReference>
<dbReference type="GO" id="GO:0003735">
    <property type="term" value="F:structural constituent of ribosome"/>
    <property type="evidence" value="ECO:0007669"/>
    <property type="project" value="InterPro"/>
</dbReference>
<dbReference type="GO" id="GO:0006412">
    <property type="term" value="P:translation"/>
    <property type="evidence" value="ECO:0007669"/>
    <property type="project" value="UniProtKB-UniRule"/>
</dbReference>
<dbReference type="CDD" id="cd00353">
    <property type="entry name" value="Ribosomal_S15p_S13e"/>
    <property type="match status" value="1"/>
</dbReference>
<dbReference type="FunFam" id="1.10.287.10:FF:000002">
    <property type="entry name" value="30S ribosomal protein S15"/>
    <property type="match status" value="1"/>
</dbReference>
<dbReference type="Gene3D" id="6.10.250.3130">
    <property type="match status" value="1"/>
</dbReference>
<dbReference type="Gene3D" id="1.10.287.10">
    <property type="entry name" value="S15/NS1, RNA-binding"/>
    <property type="match status" value="1"/>
</dbReference>
<dbReference type="HAMAP" id="MF_01343_B">
    <property type="entry name" value="Ribosomal_uS15_B"/>
    <property type="match status" value="1"/>
</dbReference>
<dbReference type="InterPro" id="IPR000589">
    <property type="entry name" value="Ribosomal_uS15"/>
</dbReference>
<dbReference type="InterPro" id="IPR005290">
    <property type="entry name" value="Ribosomal_uS15_bac-type"/>
</dbReference>
<dbReference type="InterPro" id="IPR009068">
    <property type="entry name" value="uS15_NS1_RNA-bd_sf"/>
</dbReference>
<dbReference type="NCBIfam" id="TIGR00952">
    <property type="entry name" value="S15_bact"/>
    <property type="match status" value="1"/>
</dbReference>
<dbReference type="PANTHER" id="PTHR23321">
    <property type="entry name" value="RIBOSOMAL PROTEIN S15, BACTERIAL AND ORGANELLAR"/>
    <property type="match status" value="1"/>
</dbReference>
<dbReference type="PANTHER" id="PTHR23321:SF26">
    <property type="entry name" value="SMALL RIBOSOMAL SUBUNIT PROTEIN US15M"/>
    <property type="match status" value="1"/>
</dbReference>
<dbReference type="Pfam" id="PF00312">
    <property type="entry name" value="Ribosomal_S15"/>
    <property type="match status" value="1"/>
</dbReference>
<dbReference type="SMART" id="SM01387">
    <property type="entry name" value="Ribosomal_S15"/>
    <property type="match status" value="1"/>
</dbReference>
<dbReference type="SUPFAM" id="SSF47060">
    <property type="entry name" value="S15/NS1 RNA-binding domain"/>
    <property type="match status" value="1"/>
</dbReference>
<dbReference type="PROSITE" id="PS00362">
    <property type="entry name" value="RIBOSOMAL_S15"/>
    <property type="match status" value="1"/>
</dbReference>
<organism>
    <name type="scientific">Helicobacter pylori (strain Shi470)</name>
    <dbReference type="NCBI Taxonomy" id="512562"/>
    <lineage>
        <taxon>Bacteria</taxon>
        <taxon>Pseudomonadati</taxon>
        <taxon>Campylobacterota</taxon>
        <taxon>Epsilonproteobacteria</taxon>
        <taxon>Campylobacterales</taxon>
        <taxon>Helicobacteraceae</taxon>
        <taxon>Helicobacter</taxon>
    </lineage>
</organism>
<proteinExistence type="inferred from homology"/>
<protein>
    <recommendedName>
        <fullName evidence="1">Small ribosomal subunit protein uS15</fullName>
    </recommendedName>
    <alternativeName>
        <fullName evidence="2">30S ribosomal protein S15</fullName>
    </alternativeName>
</protein>
<gene>
    <name evidence="1" type="primary">rpsO</name>
    <name type="ordered locus">HPSH_02115</name>
</gene>
<keyword id="KW-0687">Ribonucleoprotein</keyword>
<keyword id="KW-0689">Ribosomal protein</keyword>
<keyword id="KW-0694">RNA-binding</keyword>
<keyword id="KW-0699">rRNA-binding</keyword>
<sequence>MALNLEKKQEIIKAFATKENDTGSCEVQIALLNERIKLLTEHLKANPKDHSSRLGLLKLVAQRRNLLKYIKRTDHARYVVLIEKLGIKDR</sequence>
<reference key="1">
    <citation type="submission" date="2008-05" db="EMBL/GenBank/DDBJ databases">
        <title>Genome sequence of Helicobacter pylori from the remote Amazon: traces of Asian ancestry of the first Americans.</title>
        <authorList>
            <person name="Kersulyte D."/>
            <person name="Kalia A."/>
            <person name="Gilman R.H."/>
            <person name="Berg D.E."/>
        </authorList>
    </citation>
    <scope>NUCLEOTIDE SEQUENCE [LARGE SCALE GENOMIC DNA]</scope>
    <source>
        <strain>Shi470</strain>
    </source>
</reference>
<evidence type="ECO:0000255" key="1">
    <source>
        <dbReference type="HAMAP-Rule" id="MF_01343"/>
    </source>
</evidence>
<evidence type="ECO:0000305" key="2"/>
<accession>B2USP1</accession>
<comment type="function">
    <text evidence="1">One of the primary rRNA binding proteins, it binds directly to 16S rRNA where it helps nucleate assembly of the platform of the 30S subunit by binding and bridging several RNA helices of the 16S rRNA.</text>
</comment>
<comment type="function">
    <text evidence="1">Forms an intersubunit bridge (bridge B4) with the 23S rRNA of the 50S subunit in the ribosome.</text>
</comment>
<comment type="subunit">
    <text evidence="1">Part of the 30S ribosomal subunit. Forms a bridge to the 50S subunit in the 70S ribosome, contacting the 23S rRNA.</text>
</comment>
<comment type="similarity">
    <text evidence="1">Belongs to the universal ribosomal protein uS15 family.</text>
</comment>